<reference key="1">
    <citation type="journal article" date="2011" name="J. Bacteriol.">
        <title>Genome of Ochrobactrum anthropi ATCC 49188 T, a versatile opportunistic pathogen and symbiont of several eukaryotic hosts.</title>
        <authorList>
            <person name="Chain P.S."/>
            <person name="Lang D.M."/>
            <person name="Comerci D.J."/>
            <person name="Malfatti S.A."/>
            <person name="Vergez L.M."/>
            <person name="Shin M."/>
            <person name="Ugalde R.A."/>
            <person name="Garcia E."/>
            <person name="Tolmasky M.E."/>
        </authorList>
    </citation>
    <scope>NUCLEOTIDE SEQUENCE [LARGE SCALE GENOMIC DNA]</scope>
    <source>
        <strain>ATCC 49188 / DSM 6882 / CCUG 24695 / JCM 21032 / LMG 3331 / NBRC 15819 / NCTC 12168 / Alc 37</strain>
    </source>
</reference>
<accession>A6WVU6</accession>
<evidence type="ECO:0000255" key="1">
    <source>
        <dbReference type="HAMAP-Rule" id="MF_00473"/>
    </source>
</evidence>
<organism>
    <name type="scientific">Brucella anthropi (strain ATCC 49188 / DSM 6882 / CCUG 24695 / JCM 21032 / LMG 3331 / NBRC 15819 / NCTC 12168 / Alc 37)</name>
    <name type="common">Ochrobactrum anthropi</name>
    <dbReference type="NCBI Taxonomy" id="439375"/>
    <lineage>
        <taxon>Bacteria</taxon>
        <taxon>Pseudomonadati</taxon>
        <taxon>Pseudomonadota</taxon>
        <taxon>Alphaproteobacteria</taxon>
        <taxon>Hyphomicrobiales</taxon>
        <taxon>Brucellaceae</taxon>
        <taxon>Brucella/Ochrobactrum group</taxon>
        <taxon>Brucella</taxon>
    </lineage>
</organism>
<sequence length="549" mass="59734">MARDATKLEATVAKLKKHWADSAPHDMRAAFKSDPGRFERYSLSLDDLLFDWSKCRVNDETIGLLKELAIAADVEGRRAAMFAGEHINNTEDRAVLHVALRDTSSKEVLVDGHNVLPDVKEVLDRMAAFADGIRSGAIKGATGKKITDIVNIGIGGSDLGPVMATLALSPYHDGPRAHFVSNIDGAHIADTLGILDPATTLVIIASKTFTTIETMTNAQTARKWVADALGEAAVGAHFAAVSTALDRVAAFGIAEDRVFGFWDWVGGRYSVWSAIGLPVMIAIGPEDFRKFLAGAHSMDVHFRDAPLEKNLAVWLGLIGYWHRAICGYGSRAIIPYDQRLARLPAYLQQLDMESNGKSVTVDGKPVSGPTGPVVWGEPGTNGQHAFFQLLHQGTDTIPLEFIVAAKGHEKHLDHQHEMLLANCLAQSEALMKGRTLDEARAQLKAKNLPESEVERIAPHRVFSGNRPSLTLVHDKLDPFALGRLVALYEHRVFVEAQIFGINAFDQWGVELGKELATELLPVVSGEESSDGRDASTQGLVAHLHARRKA</sequence>
<protein>
    <recommendedName>
        <fullName evidence="1">Glucose-6-phosphate isomerase</fullName>
        <shortName evidence="1">GPI</shortName>
        <ecNumber evidence="1">5.3.1.9</ecNumber>
    </recommendedName>
    <alternativeName>
        <fullName evidence="1">Phosphoglucose isomerase</fullName>
        <shortName evidence="1">PGI</shortName>
    </alternativeName>
    <alternativeName>
        <fullName evidence="1">Phosphohexose isomerase</fullName>
        <shortName evidence="1">PHI</shortName>
    </alternativeName>
</protein>
<feature type="chain" id="PRO_1000013993" description="Glucose-6-phosphate isomerase">
    <location>
        <begin position="1"/>
        <end position="549"/>
    </location>
</feature>
<feature type="active site" description="Proton donor" evidence="1">
    <location>
        <position position="353"/>
    </location>
</feature>
<feature type="active site" evidence="1">
    <location>
        <position position="384"/>
    </location>
</feature>
<feature type="active site" evidence="1">
    <location>
        <position position="513"/>
    </location>
</feature>
<comment type="function">
    <text evidence="1">Catalyzes the reversible isomerization of glucose-6-phosphate to fructose-6-phosphate.</text>
</comment>
<comment type="catalytic activity">
    <reaction evidence="1">
        <text>alpha-D-glucose 6-phosphate = beta-D-fructose 6-phosphate</text>
        <dbReference type="Rhea" id="RHEA:11816"/>
        <dbReference type="ChEBI" id="CHEBI:57634"/>
        <dbReference type="ChEBI" id="CHEBI:58225"/>
        <dbReference type="EC" id="5.3.1.9"/>
    </reaction>
</comment>
<comment type="pathway">
    <text evidence="1">Carbohydrate biosynthesis; gluconeogenesis.</text>
</comment>
<comment type="pathway">
    <text evidence="1">Carbohydrate degradation; glycolysis; D-glyceraldehyde 3-phosphate and glycerone phosphate from D-glucose: step 2/4.</text>
</comment>
<comment type="subcellular location">
    <subcellularLocation>
        <location evidence="1">Cytoplasm</location>
    </subcellularLocation>
</comment>
<comment type="similarity">
    <text evidence="1">Belongs to the GPI family.</text>
</comment>
<keyword id="KW-0963">Cytoplasm</keyword>
<keyword id="KW-0312">Gluconeogenesis</keyword>
<keyword id="KW-0324">Glycolysis</keyword>
<keyword id="KW-0413">Isomerase</keyword>
<keyword id="KW-1185">Reference proteome</keyword>
<dbReference type="EC" id="5.3.1.9" evidence="1"/>
<dbReference type="EMBL" id="CP000758">
    <property type="protein sequence ID" value="ABS13100.1"/>
    <property type="molecule type" value="Genomic_DNA"/>
</dbReference>
<dbReference type="RefSeq" id="WP_012090690.1">
    <property type="nucleotide sequence ID" value="NC_009667.1"/>
</dbReference>
<dbReference type="SMR" id="A6WVU6"/>
<dbReference type="STRING" id="439375.Oant_0369"/>
<dbReference type="KEGG" id="oan:Oant_0369"/>
<dbReference type="PATRIC" id="fig|439375.7.peg.392"/>
<dbReference type="eggNOG" id="COG0166">
    <property type="taxonomic scope" value="Bacteria"/>
</dbReference>
<dbReference type="HOGENOM" id="CLU_017947_3_1_5"/>
<dbReference type="PhylomeDB" id="A6WVU6"/>
<dbReference type="UniPathway" id="UPA00109">
    <property type="reaction ID" value="UER00181"/>
</dbReference>
<dbReference type="UniPathway" id="UPA00138"/>
<dbReference type="Proteomes" id="UP000002301">
    <property type="component" value="Chromosome 1"/>
</dbReference>
<dbReference type="GO" id="GO:0005829">
    <property type="term" value="C:cytosol"/>
    <property type="evidence" value="ECO:0007669"/>
    <property type="project" value="TreeGrafter"/>
</dbReference>
<dbReference type="GO" id="GO:0097367">
    <property type="term" value="F:carbohydrate derivative binding"/>
    <property type="evidence" value="ECO:0007669"/>
    <property type="project" value="InterPro"/>
</dbReference>
<dbReference type="GO" id="GO:0004347">
    <property type="term" value="F:glucose-6-phosphate isomerase activity"/>
    <property type="evidence" value="ECO:0007669"/>
    <property type="project" value="UniProtKB-UniRule"/>
</dbReference>
<dbReference type="GO" id="GO:0048029">
    <property type="term" value="F:monosaccharide binding"/>
    <property type="evidence" value="ECO:0007669"/>
    <property type="project" value="TreeGrafter"/>
</dbReference>
<dbReference type="GO" id="GO:0006094">
    <property type="term" value="P:gluconeogenesis"/>
    <property type="evidence" value="ECO:0007669"/>
    <property type="project" value="UniProtKB-UniRule"/>
</dbReference>
<dbReference type="GO" id="GO:0051156">
    <property type="term" value="P:glucose 6-phosphate metabolic process"/>
    <property type="evidence" value="ECO:0007669"/>
    <property type="project" value="TreeGrafter"/>
</dbReference>
<dbReference type="GO" id="GO:0006096">
    <property type="term" value="P:glycolytic process"/>
    <property type="evidence" value="ECO:0007669"/>
    <property type="project" value="UniProtKB-UniRule"/>
</dbReference>
<dbReference type="CDD" id="cd05015">
    <property type="entry name" value="SIS_PGI_1"/>
    <property type="match status" value="1"/>
</dbReference>
<dbReference type="CDD" id="cd05016">
    <property type="entry name" value="SIS_PGI_2"/>
    <property type="match status" value="1"/>
</dbReference>
<dbReference type="FunFam" id="3.40.50.10490:FF:000018">
    <property type="entry name" value="Glucose-6-phosphate isomerase"/>
    <property type="match status" value="1"/>
</dbReference>
<dbReference type="Gene3D" id="1.10.1390.10">
    <property type="match status" value="1"/>
</dbReference>
<dbReference type="Gene3D" id="3.40.50.10490">
    <property type="entry name" value="Glucose-6-phosphate isomerase like protein, domain 1"/>
    <property type="match status" value="2"/>
</dbReference>
<dbReference type="HAMAP" id="MF_00473">
    <property type="entry name" value="G6P_isomerase"/>
    <property type="match status" value="1"/>
</dbReference>
<dbReference type="InterPro" id="IPR001672">
    <property type="entry name" value="G6P_Isomerase"/>
</dbReference>
<dbReference type="InterPro" id="IPR023096">
    <property type="entry name" value="G6P_Isomerase_C"/>
</dbReference>
<dbReference type="InterPro" id="IPR018189">
    <property type="entry name" value="Phosphoglucose_isomerase_CS"/>
</dbReference>
<dbReference type="InterPro" id="IPR046348">
    <property type="entry name" value="SIS_dom_sf"/>
</dbReference>
<dbReference type="InterPro" id="IPR035476">
    <property type="entry name" value="SIS_PGI_1"/>
</dbReference>
<dbReference type="InterPro" id="IPR035482">
    <property type="entry name" value="SIS_PGI_2"/>
</dbReference>
<dbReference type="NCBIfam" id="NF001211">
    <property type="entry name" value="PRK00179.1"/>
    <property type="match status" value="1"/>
</dbReference>
<dbReference type="PANTHER" id="PTHR11469">
    <property type="entry name" value="GLUCOSE-6-PHOSPHATE ISOMERASE"/>
    <property type="match status" value="1"/>
</dbReference>
<dbReference type="PANTHER" id="PTHR11469:SF1">
    <property type="entry name" value="GLUCOSE-6-PHOSPHATE ISOMERASE"/>
    <property type="match status" value="1"/>
</dbReference>
<dbReference type="Pfam" id="PF00342">
    <property type="entry name" value="PGI"/>
    <property type="match status" value="1"/>
</dbReference>
<dbReference type="PRINTS" id="PR00662">
    <property type="entry name" value="G6PISOMERASE"/>
</dbReference>
<dbReference type="SUPFAM" id="SSF53697">
    <property type="entry name" value="SIS domain"/>
    <property type="match status" value="1"/>
</dbReference>
<dbReference type="PROSITE" id="PS00765">
    <property type="entry name" value="P_GLUCOSE_ISOMERASE_1"/>
    <property type="match status" value="1"/>
</dbReference>
<dbReference type="PROSITE" id="PS00174">
    <property type="entry name" value="P_GLUCOSE_ISOMERASE_2"/>
    <property type="match status" value="1"/>
</dbReference>
<dbReference type="PROSITE" id="PS51463">
    <property type="entry name" value="P_GLUCOSE_ISOMERASE_3"/>
    <property type="match status" value="1"/>
</dbReference>
<gene>
    <name evidence="1" type="primary">pgi</name>
    <name type="ordered locus">Oant_0369</name>
</gene>
<proteinExistence type="inferred from homology"/>
<name>G6PI_BRUA4</name>